<gene>
    <name type="primary">ACADSB</name>
</gene>
<comment type="function">
    <text evidence="1 2">Short and branched chain specific acyl-CoA dehydrogenase that catalyzes the removal of one hydrogen from C-2 and C-3 of the fatty acyl-CoA thioester, resulting in the formation of trans-2-enoyl-CoA. Among the different mitochondrial acyl-CoA dehydrogenases, acts specifically on short and branched chain acyl-CoA derivatives such as (S)-2-methylbutyryl-CoA as well as short straight chain acyl-CoAs such as butyryl-CoA (By similarity). Plays an important role in the metabolism of L-isoleucine by catalyzing the dehydrogenation of 2-methylbutyryl-CoA, one of the steps of the L-isoleucine catabolic pathway (By similarity). Can also act on valproyl-CoA, a metabolite of the valproic acid drug (By similarity).</text>
</comment>
<comment type="catalytic activity">
    <reaction evidence="2">
        <text>2-methylbutanoyl-CoA + oxidized [electron-transfer flavoprotein] + H(+) = (2E)-2-methylbut-2-enoyl-CoA + reduced [electron-transfer flavoprotein]</text>
        <dbReference type="Rhea" id="RHEA:43780"/>
        <dbReference type="Rhea" id="RHEA-COMP:10685"/>
        <dbReference type="Rhea" id="RHEA-COMP:10686"/>
        <dbReference type="ChEBI" id="CHEBI:15378"/>
        <dbReference type="ChEBI" id="CHEBI:57336"/>
        <dbReference type="ChEBI" id="CHEBI:57337"/>
        <dbReference type="ChEBI" id="CHEBI:57692"/>
        <dbReference type="ChEBI" id="CHEBI:58307"/>
        <dbReference type="EC" id="1.3.8.5"/>
    </reaction>
    <physiologicalReaction direction="left-to-right" evidence="2">
        <dbReference type="Rhea" id="RHEA:43781"/>
    </physiologicalReaction>
</comment>
<comment type="catalytic activity">
    <reaction evidence="2">
        <text>(2S)-2-methylbutanoyl-CoA + oxidized [electron-transfer flavoprotein] + H(+) = (2E)-2-methylbut-2-enoyl-CoA + reduced [electron-transfer flavoprotein]</text>
        <dbReference type="Rhea" id="RHEA:48256"/>
        <dbReference type="Rhea" id="RHEA-COMP:10685"/>
        <dbReference type="Rhea" id="RHEA-COMP:10686"/>
        <dbReference type="ChEBI" id="CHEBI:15378"/>
        <dbReference type="ChEBI" id="CHEBI:57337"/>
        <dbReference type="ChEBI" id="CHEBI:57692"/>
        <dbReference type="ChEBI" id="CHEBI:58307"/>
        <dbReference type="ChEBI" id="CHEBI:88166"/>
    </reaction>
    <physiologicalReaction direction="left-to-right" evidence="2">
        <dbReference type="Rhea" id="RHEA:48257"/>
    </physiologicalReaction>
</comment>
<comment type="catalytic activity">
    <reaction evidence="2">
        <text>(2R)-2-methylbutanoyl-CoA + oxidized [electron-transfer flavoprotein] + H(+) = ethylacryloyl-CoA + reduced [electron-transfer flavoprotein]</text>
        <dbReference type="Rhea" id="RHEA:65296"/>
        <dbReference type="Rhea" id="RHEA-COMP:10685"/>
        <dbReference type="Rhea" id="RHEA-COMP:10686"/>
        <dbReference type="ChEBI" id="CHEBI:15378"/>
        <dbReference type="ChEBI" id="CHEBI:57692"/>
        <dbReference type="ChEBI" id="CHEBI:58307"/>
        <dbReference type="ChEBI" id="CHEBI:156439"/>
        <dbReference type="ChEBI" id="CHEBI:156440"/>
    </reaction>
    <physiologicalReaction direction="left-to-right" evidence="2">
        <dbReference type="Rhea" id="RHEA:65297"/>
    </physiologicalReaction>
</comment>
<comment type="catalytic activity">
    <reaction evidence="2">
        <text>butanoyl-CoA + oxidized [electron-transfer flavoprotein] + H(+) = (2E)-butenoyl-CoA + reduced [electron-transfer flavoprotein]</text>
        <dbReference type="Rhea" id="RHEA:24004"/>
        <dbReference type="Rhea" id="RHEA-COMP:10685"/>
        <dbReference type="Rhea" id="RHEA-COMP:10686"/>
        <dbReference type="ChEBI" id="CHEBI:15378"/>
        <dbReference type="ChEBI" id="CHEBI:57332"/>
        <dbReference type="ChEBI" id="CHEBI:57371"/>
        <dbReference type="ChEBI" id="CHEBI:57692"/>
        <dbReference type="ChEBI" id="CHEBI:58307"/>
    </reaction>
    <physiologicalReaction direction="left-to-right" evidence="2">
        <dbReference type="Rhea" id="RHEA:24005"/>
    </physiologicalReaction>
</comment>
<comment type="catalytic activity">
    <reaction evidence="2">
        <text>2-methylpropanoyl-CoA + oxidized [electron-transfer flavoprotein] + H(+) = 2-methylpropenoyl-CoA + reduced [electron-transfer flavoprotein]</text>
        <dbReference type="Rhea" id="RHEA:44180"/>
        <dbReference type="Rhea" id="RHEA-COMP:10685"/>
        <dbReference type="Rhea" id="RHEA-COMP:10686"/>
        <dbReference type="ChEBI" id="CHEBI:15378"/>
        <dbReference type="ChEBI" id="CHEBI:57338"/>
        <dbReference type="ChEBI" id="CHEBI:57692"/>
        <dbReference type="ChEBI" id="CHEBI:58307"/>
        <dbReference type="ChEBI" id="CHEBI:62500"/>
    </reaction>
    <physiologicalReaction direction="left-to-right" evidence="2">
        <dbReference type="Rhea" id="RHEA:44181"/>
    </physiologicalReaction>
</comment>
<comment type="catalytic activity">
    <reaction evidence="2">
        <text>hexanoyl-CoA + oxidized [electron-transfer flavoprotein] + H(+) = (2E)-hexenoyl-CoA + reduced [electron-transfer flavoprotein]</text>
        <dbReference type="Rhea" id="RHEA:43464"/>
        <dbReference type="Rhea" id="RHEA-COMP:10685"/>
        <dbReference type="Rhea" id="RHEA-COMP:10686"/>
        <dbReference type="ChEBI" id="CHEBI:15378"/>
        <dbReference type="ChEBI" id="CHEBI:57692"/>
        <dbReference type="ChEBI" id="CHEBI:58307"/>
        <dbReference type="ChEBI" id="CHEBI:62077"/>
        <dbReference type="ChEBI" id="CHEBI:62620"/>
    </reaction>
    <physiologicalReaction direction="left-to-right" evidence="2">
        <dbReference type="Rhea" id="RHEA:43465"/>
    </physiologicalReaction>
</comment>
<comment type="catalytic activity">
    <reaction evidence="2">
        <text>valproyl-CoA + oxidized [electron-transfer flavoprotein] + H(+) = (2E)-2-propylpent-2-enoyl-CoA + reduced [electron-transfer flavoprotein]</text>
        <dbReference type="Rhea" id="RHEA:65344"/>
        <dbReference type="Rhea" id="RHEA-COMP:10685"/>
        <dbReference type="Rhea" id="RHEA-COMP:10686"/>
        <dbReference type="ChEBI" id="CHEBI:15378"/>
        <dbReference type="ChEBI" id="CHEBI:57692"/>
        <dbReference type="ChEBI" id="CHEBI:58307"/>
        <dbReference type="ChEBI" id="CHEBI:156457"/>
        <dbReference type="ChEBI" id="CHEBI:156458"/>
    </reaction>
    <physiologicalReaction direction="left-to-right" evidence="2">
        <dbReference type="Rhea" id="RHEA:65345"/>
    </physiologicalReaction>
</comment>
<comment type="cofactor">
    <cofactor evidence="1">
        <name>FAD</name>
        <dbReference type="ChEBI" id="CHEBI:57692"/>
    </cofactor>
</comment>
<comment type="pathway">
    <text evidence="1">Lipid metabolism; mitochondrial fatty acid beta-oxidation.</text>
</comment>
<comment type="pathway">
    <text evidence="1">Amino-acid degradation; L-isoleucine degradation.</text>
</comment>
<comment type="subunit">
    <text evidence="1">Homotetramer.</text>
</comment>
<comment type="subcellular location">
    <subcellularLocation>
        <location evidence="1">Mitochondrion matrix</location>
    </subcellularLocation>
</comment>
<comment type="similarity">
    <text evidence="4">Belongs to the acyl-CoA dehydrogenase family.</text>
</comment>
<proteinExistence type="evidence at transcript level"/>
<feature type="transit peptide" description="Mitochondrion" evidence="1">
    <location>
        <begin position="1"/>
        <end position="33"/>
    </location>
</feature>
<feature type="chain" id="PRO_0000330465" description="Short/branched chain specific acyl-CoA dehydrogenase, mitochondrial">
    <location>
        <begin position="34"/>
        <end position="432"/>
    </location>
</feature>
<feature type="active site" description="Proton acceptor" evidence="1">
    <location>
        <position position="414"/>
    </location>
</feature>
<feature type="binding site" description="in other chain" evidence="1">
    <location>
        <begin position="174"/>
        <end position="183"/>
    </location>
    <ligand>
        <name>FAD</name>
        <dbReference type="ChEBI" id="CHEBI:57692"/>
        <note>ligand shared between dimeric partners</note>
    </ligand>
</feature>
<feature type="binding site" evidence="1">
    <location>
        <position position="183"/>
    </location>
    <ligand>
        <name>substrate</name>
    </ligand>
</feature>
<feature type="binding site" description="in other chain" evidence="1">
    <location>
        <begin position="207"/>
        <end position="209"/>
    </location>
    <ligand>
        <name>FAD</name>
        <dbReference type="ChEBI" id="CHEBI:57692"/>
        <note>ligand shared between dimeric partners</note>
    </ligand>
</feature>
<feature type="binding site" evidence="1">
    <location>
        <position position="229"/>
    </location>
    <ligand>
        <name>substrate</name>
    </ligand>
</feature>
<feature type="binding site" evidence="1">
    <location>
        <position position="283"/>
    </location>
    <ligand>
        <name>substrate</name>
    </ligand>
</feature>
<feature type="binding site" evidence="1">
    <location>
        <begin position="291"/>
        <end position="294"/>
    </location>
    <ligand>
        <name>substrate</name>
    </ligand>
</feature>
<feature type="binding site" evidence="1">
    <location>
        <position position="319"/>
    </location>
    <ligand>
        <name>FAD</name>
        <dbReference type="ChEBI" id="CHEBI:57692"/>
        <note>ligand shared between dimeric partners</note>
    </ligand>
</feature>
<feature type="binding site" evidence="1">
    <location>
        <position position="330"/>
    </location>
    <ligand>
        <name>FAD</name>
        <dbReference type="ChEBI" id="CHEBI:57692"/>
        <note>ligand shared between dimeric partners</note>
    </ligand>
</feature>
<feature type="binding site" evidence="1">
    <location>
        <begin position="387"/>
        <end position="391"/>
    </location>
    <ligand>
        <name>FAD</name>
        <dbReference type="ChEBI" id="CHEBI:57692"/>
        <note>ligand shared between dimeric partners</note>
    </ligand>
</feature>
<feature type="binding site" description="in other chain" evidence="1">
    <location>
        <begin position="416"/>
        <end position="418"/>
    </location>
    <ligand>
        <name>FAD</name>
        <dbReference type="ChEBI" id="CHEBI:57692"/>
        <note>ligand shared between dimeric partners</note>
    </ligand>
</feature>
<feature type="modified residue" description="N6-acetyllysine; alternate" evidence="3">
    <location>
        <position position="70"/>
    </location>
</feature>
<feature type="modified residue" description="N6-succinyllysine; alternate" evidence="3">
    <location>
        <position position="70"/>
    </location>
</feature>
<feature type="modified residue" description="Phosphoserine" evidence="1">
    <location>
        <position position="183"/>
    </location>
</feature>
<feature type="modified residue" description="N6-acetyllysine; alternate" evidence="1">
    <location>
        <position position="284"/>
    </location>
</feature>
<feature type="modified residue" description="N6-succinyllysine; alternate" evidence="3">
    <location>
        <position position="284"/>
    </location>
</feature>
<feature type="modified residue" description="N6-acetyllysine" evidence="3">
    <location>
        <position position="426"/>
    </location>
</feature>
<dbReference type="EC" id="1.3.8.5" evidence="2"/>
<dbReference type="EMBL" id="CR857321">
    <property type="protein sequence ID" value="CAH89617.1"/>
    <property type="molecule type" value="mRNA"/>
</dbReference>
<dbReference type="RefSeq" id="NP_001124722.1">
    <property type="nucleotide sequence ID" value="NM_001131250.2"/>
</dbReference>
<dbReference type="RefSeq" id="XP_054377344.2">
    <property type="nucleotide sequence ID" value="XM_054521369.2"/>
</dbReference>
<dbReference type="SMR" id="Q5RF40"/>
<dbReference type="FunCoup" id="Q5RF40">
    <property type="interactions" value="1286"/>
</dbReference>
<dbReference type="STRING" id="9601.ENSPPYP00000003189"/>
<dbReference type="GeneID" id="100171571"/>
<dbReference type="KEGG" id="pon:100171571"/>
<dbReference type="CTD" id="36"/>
<dbReference type="eggNOG" id="KOG0139">
    <property type="taxonomic scope" value="Eukaryota"/>
</dbReference>
<dbReference type="InParanoid" id="Q5RF40"/>
<dbReference type="OrthoDB" id="10262177at2759"/>
<dbReference type="UniPathway" id="UPA00364"/>
<dbReference type="UniPathway" id="UPA00660"/>
<dbReference type="Proteomes" id="UP000001595">
    <property type="component" value="Unplaced"/>
</dbReference>
<dbReference type="GO" id="GO:0005759">
    <property type="term" value="C:mitochondrial matrix"/>
    <property type="evidence" value="ECO:0007669"/>
    <property type="project" value="UniProtKB-SubCell"/>
</dbReference>
<dbReference type="GO" id="GO:0005739">
    <property type="term" value="C:mitochondrion"/>
    <property type="evidence" value="ECO:0000250"/>
    <property type="project" value="UniProtKB"/>
</dbReference>
<dbReference type="GO" id="GO:0050660">
    <property type="term" value="F:flavin adenine dinucleotide binding"/>
    <property type="evidence" value="ECO:0007669"/>
    <property type="project" value="InterPro"/>
</dbReference>
<dbReference type="GO" id="GO:0042802">
    <property type="term" value="F:identical protein binding"/>
    <property type="evidence" value="ECO:0000250"/>
    <property type="project" value="UniProtKB"/>
</dbReference>
<dbReference type="GO" id="GO:0003853">
    <property type="term" value="F:short-chain 2-methyl fatty acyl-CoA dehydrogenase activity"/>
    <property type="evidence" value="ECO:0000250"/>
    <property type="project" value="UniProtKB"/>
</dbReference>
<dbReference type="GO" id="GO:0016937">
    <property type="term" value="F:short-chain fatty acyl-CoA dehydrogenase activity"/>
    <property type="evidence" value="ECO:0000250"/>
    <property type="project" value="UniProtKB"/>
</dbReference>
<dbReference type="GO" id="GO:0006631">
    <property type="term" value="P:fatty acid metabolic process"/>
    <property type="evidence" value="ECO:0000250"/>
    <property type="project" value="UniProtKB"/>
</dbReference>
<dbReference type="GO" id="GO:0006550">
    <property type="term" value="P:isoleucine catabolic process"/>
    <property type="evidence" value="ECO:0000250"/>
    <property type="project" value="UniProtKB"/>
</dbReference>
<dbReference type="CDD" id="cd01158">
    <property type="entry name" value="SCAD_SBCAD"/>
    <property type="match status" value="1"/>
</dbReference>
<dbReference type="FunFam" id="1.10.540.10:FF:000012">
    <property type="entry name" value="Acyl-CoA dehydrogenase short/branched chain"/>
    <property type="match status" value="1"/>
</dbReference>
<dbReference type="FunFam" id="1.20.140.10:FF:000002">
    <property type="entry name" value="Acyl-CoA dehydrogenase short/branched chain"/>
    <property type="match status" value="1"/>
</dbReference>
<dbReference type="FunFam" id="2.40.110.10:FF:000001">
    <property type="entry name" value="Acyl-CoA dehydrogenase, mitochondrial"/>
    <property type="match status" value="1"/>
</dbReference>
<dbReference type="Gene3D" id="1.10.540.10">
    <property type="entry name" value="Acyl-CoA dehydrogenase/oxidase, N-terminal domain"/>
    <property type="match status" value="1"/>
</dbReference>
<dbReference type="Gene3D" id="2.40.110.10">
    <property type="entry name" value="Butyryl-CoA Dehydrogenase, subunit A, domain 2"/>
    <property type="match status" value="1"/>
</dbReference>
<dbReference type="Gene3D" id="1.20.140.10">
    <property type="entry name" value="Butyryl-CoA Dehydrogenase, subunit A, domain 3"/>
    <property type="match status" value="1"/>
</dbReference>
<dbReference type="InterPro" id="IPR006089">
    <property type="entry name" value="Acyl-CoA_DH_CS"/>
</dbReference>
<dbReference type="InterPro" id="IPR006091">
    <property type="entry name" value="Acyl-CoA_Oxase/DH_mid-dom"/>
</dbReference>
<dbReference type="InterPro" id="IPR046373">
    <property type="entry name" value="Acyl-CoA_Oxase/DH_mid-dom_sf"/>
</dbReference>
<dbReference type="InterPro" id="IPR036250">
    <property type="entry name" value="AcylCo_DH-like_C"/>
</dbReference>
<dbReference type="InterPro" id="IPR009075">
    <property type="entry name" value="AcylCo_DH/oxidase_C"/>
</dbReference>
<dbReference type="InterPro" id="IPR013786">
    <property type="entry name" value="AcylCoA_DH/ox_N"/>
</dbReference>
<dbReference type="InterPro" id="IPR037069">
    <property type="entry name" value="AcylCoA_DH/ox_N_sf"/>
</dbReference>
<dbReference type="InterPro" id="IPR009100">
    <property type="entry name" value="AcylCoA_DH/oxidase_NM_dom_sf"/>
</dbReference>
<dbReference type="PANTHER" id="PTHR43884">
    <property type="entry name" value="ACYL-COA DEHYDROGENASE"/>
    <property type="match status" value="1"/>
</dbReference>
<dbReference type="PANTHER" id="PTHR43884:SF1">
    <property type="entry name" value="SHORT_BRANCHED CHAIN SPECIFIC ACYL-COA DEHYDROGENASE, MITOCHONDRIAL"/>
    <property type="match status" value="1"/>
</dbReference>
<dbReference type="Pfam" id="PF00441">
    <property type="entry name" value="Acyl-CoA_dh_1"/>
    <property type="match status" value="1"/>
</dbReference>
<dbReference type="Pfam" id="PF02770">
    <property type="entry name" value="Acyl-CoA_dh_M"/>
    <property type="match status" value="1"/>
</dbReference>
<dbReference type="Pfam" id="PF02771">
    <property type="entry name" value="Acyl-CoA_dh_N"/>
    <property type="match status" value="1"/>
</dbReference>
<dbReference type="SUPFAM" id="SSF47203">
    <property type="entry name" value="Acyl-CoA dehydrogenase C-terminal domain-like"/>
    <property type="match status" value="1"/>
</dbReference>
<dbReference type="SUPFAM" id="SSF56645">
    <property type="entry name" value="Acyl-CoA dehydrogenase NM domain-like"/>
    <property type="match status" value="1"/>
</dbReference>
<dbReference type="PROSITE" id="PS00072">
    <property type="entry name" value="ACYL_COA_DH_1"/>
    <property type="match status" value="1"/>
</dbReference>
<dbReference type="PROSITE" id="PS00073">
    <property type="entry name" value="ACYL_COA_DH_2"/>
    <property type="match status" value="1"/>
</dbReference>
<keyword id="KW-0007">Acetylation</keyword>
<keyword id="KW-0274">FAD</keyword>
<keyword id="KW-0276">Fatty acid metabolism</keyword>
<keyword id="KW-0285">Flavoprotein</keyword>
<keyword id="KW-0443">Lipid metabolism</keyword>
<keyword id="KW-0496">Mitochondrion</keyword>
<keyword id="KW-0560">Oxidoreductase</keyword>
<keyword id="KW-0597">Phosphoprotein</keyword>
<keyword id="KW-1185">Reference proteome</keyword>
<keyword id="KW-0809">Transit peptide</keyword>
<sequence length="432" mass="47485">MEGLAVRLLRGSRLLRRNFPTCLSSWKIPPHVSKSSQSEALLNITNNGIHFAPLQTFTDEEMMIKSSVKKFAQEQIAPLVSTMDENSKMEKSVIQGLFQQGLMGIEVDPEYGGTGASFLSTVLVIEELAKVDASVAVFCEIQNTLINTLIRKHGTEEQKGTYLPQLTTEKVGSFCLSEAGAGSDSFALKTRADKEGDYYVLNGSKMWISSAEHAGLFLVMANVDPTIGYKGITSFLVDRDTPGLHIGKPENKLGLRASSTCPLTFENVKVPETNILGQIGHGYKYAIGSLNEGRIGIAAQMLGLAQGCFDYTIPYIKERIQFGKRLFDFQGLQHQVAHVATQLEAARLLTYNAARLLEAGKPFIKEASMAKYYASEIAGQTTSKCIEWMGGVGYTKDYPVEKYFRDAKIGTIYEGASNIQLNTIAKHIDAEY</sequence>
<evidence type="ECO:0000250" key="1">
    <source>
        <dbReference type="UniProtKB" id="P45954"/>
    </source>
</evidence>
<evidence type="ECO:0000250" key="2">
    <source>
        <dbReference type="UniProtKB" id="P70584"/>
    </source>
</evidence>
<evidence type="ECO:0000250" key="3">
    <source>
        <dbReference type="UniProtKB" id="Q9DBL1"/>
    </source>
</evidence>
<evidence type="ECO:0000305" key="4"/>
<reference key="1">
    <citation type="submission" date="2004-11" db="EMBL/GenBank/DDBJ databases">
        <authorList>
            <consortium name="The German cDNA consortium"/>
        </authorList>
    </citation>
    <scope>NUCLEOTIDE SEQUENCE [LARGE SCALE MRNA]</scope>
    <source>
        <tissue>Kidney</tissue>
    </source>
</reference>
<accession>Q5RF40</accession>
<protein>
    <recommendedName>
        <fullName evidence="2">Short/branched chain specific acyl-CoA dehydrogenase, mitochondrial</fullName>
        <shortName evidence="2">SBCAD</shortName>
        <ecNumber evidence="2">1.3.8.5</ecNumber>
    </recommendedName>
    <alternativeName>
        <fullName>2-methyl branched chain acyl-CoA dehydrogenase</fullName>
        <shortName>2-MEBCAD</shortName>
    </alternativeName>
    <alternativeName>
        <fullName>2-methylbutyryl-coenzyme A dehydrogenase</fullName>
        <shortName>2-methylbutyryl-CoA dehydrogenase</shortName>
    </alternativeName>
</protein>
<name>ACDSB_PONAB</name>
<organism>
    <name type="scientific">Pongo abelii</name>
    <name type="common">Sumatran orangutan</name>
    <name type="synonym">Pongo pygmaeus abelii</name>
    <dbReference type="NCBI Taxonomy" id="9601"/>
    <lineage>
        <taxon>Eukaryota</taxon>
        <taxon>Metazoa</taxon>
        <taxon>Chordata</taxon>
        <taxon>Craniata</taxon>
        <taxon>Vertebrata</taxon>
        <taxon>Euteleostomi</taxon>
        <taxon>Mammalia</taxon>
        <taxon>Eutheria</taxon>
        <taxon>Euarchontoglires</taxon>
        <taxon>Primates</taxon>
        <taxon>Haplorrhini</taxon>
        <taxon>Catarrhini</taxon>
        <taxon>Hominidae</taxon>
        <taxon>Pongo</taxon>
    </lineage>
</organism>